<feature type="chain" id="PRO_0000109406" description="Pyridoxal 5'-phosphate synthase subunit PdxS">
    <location>
        <begin position="1"/>
        <end position="306"/>
    </location>
</feature>
<feature type="active site" description="Schiff-base intermediate with D-ribose 5-phosphate" evidence="1">
    <location>
        <position position="93"/>
    </location>
</feature>
<feature type="binding site" evidence="1">
    <location>
        <position position="36"/>
    </location>
    <ligand>
        <name>D-ribose 5-phosphate</name>
        <dbReference type="ChEBI" id="CHEBI:78346"/>
    </ligand>
</feature>
<feature type="binding site" evidence="1">
    <location>
        <position position="165"/>
    </location>
    <ligand>
        <name>D-ribose 5-phosphate</name>
        <dbReference type="ChEBI" id="CHEBI:78346"/>
    </ligand>
</feature>
<feature type="binding site" evidence="1">
    <location>
        <position position="177"/>
    </location>
    <ligand>
        <name>D-glyceraldehyde 3-phosphate</name>
        <dbReference type="ChEBI" id="CHEBI:59776"/>
    </ligand>
</feature>
<feature type="binding site" evidence="1">
    <location>
        <position position="226"/>
    </location>
    <ligand>
        <name>D-ribose 5-phosphate</name>
        <dbReference type="ChEBI" id="CHEBI:78346"/>
    </ligand>
</feature>
<feature type="binding site" evidence="1">
    <location>
        <begin position="247"/>
        <end position="248"/>
    </location>
    <ligand>
        <name>D-ribose 5-phosphate</name>
        <dbReference type="ChEBI" id="CHEBI:78346"/>
    </ligand>
</feature>
<accession>Q5YTD8</accession>
<sequence length="306" mass="32722">MTQEFAVTTPETTQTVGTARVKRGMAEMLKGGVIMDVVTPEQAKIAEDAGAVAVMALERVPADIRAQGGVSRMSDPDMIDGIINAVSIPVMAKARIGHFVEAQILQSLGVDYIDESEVLTPADYTNHIDKWQFTVPFVCGATNLGEALRRITEGAAMIRSKGEAGTGDVSNATTHMRKIRQEIRKLAALPEDELYVAAKELQAPYELVREVAETGKLPVVLFTAGGIATPADAAMMMQLGAEGVFVGSGIFKSGNPAQRAEAIVKATTFYDDPDVLAKVSRGLGEAMVGINVEEIPQPHRLAERGW</sequence>
<comment type="function">
    <text evidence="1">Catalyzes the formation of pyridoxal 5'-phosphate from ribose 5-phosphate (RBP), glyceraldehyde 3-phosphate (G3P) and ammonia. The ammonia is provided by the PdxT subunit. Can also use ribulose 5-phosphate and dihydroxyacetone phosphate as substrates, resulting from enzyme-catalyzed isomerization of RBP and G3P, respectively.</text>
</comment>
<comment type="catalytic activity">
    <reaction evidence="1">
        <text>aldehydo-D-ribose 5-phosphate + D-glyceraldehyde 3-phosphate + L-glutamine = pyridoxal 5'-phosphate + L-glutamate + phosphate + 3 H2O + H(+)</text>
        <dbReference type="Rhea" id="RHEA:31507"/>
        <dbReference type="ChEBI" id="CHEBI:15377"/>
        <dbReference type="ChEBI" id="CHEBI:15378"/>
        <dbReference type="ChEBI" id="CHEBI:29985"/>
        <dbReference type="ChEBI" id="CHEBI:43474"/>
        <dbReference type="ChEBI" id="CHEBI:58273"/>
        <dbReference type="ChEBI" id="CHEBI:58359"/>
        <dbReference type="ChEBI" id="CHEBI:59776"/>
        <dbReference type="ChEBI" id="CHEBI:597326"/>
        <dbReference type="EC" id="4.3.3.6"/>
    </reaction>
</comment>
<comment type="pathway">
    <text evidence="1">Cofactor biosynthesis; pyridoxal 5'-phosphate biosynthesis.</text>
</comment>
<comment type="subunit">
    <text evidence="1">In the presence of PdxT, forms a dodecamer of heterodimers.</text>
</comment>
<comment type="similarity">
    <text evidence="1">Belongs to the PdxS/SNZ family.</text>
</comment>
<dbReference type="EC" id="4.3.3.6" evidence="1"/>
<dbReference type="EMBL" id="AP006618">
    <property type="protein sequence ID" value="BAD58553.1"/>
    <property type="molecule type" value="Genomic_DNA"/>
</dbReference>
<dbReference type="RefSeq" id="WP_011210238.1">
    <property type="nucleotide sequence ID" value="NC_006361.1"/>
</dbReference>
<dbReference type="SMR" id="Q5YTD8"/>
<dbReference type="STRING" id="247156.NFA_37050"/>
<dbReference type="GeneID" id="61134397"/>
<dbReference type="KEGG" id="nfa:NFA_37050"/>
<dbReference type="eggNOG" id="COG0214">
    <property type="taxonomic scope" value="Bacteria"/>
</dbReference>
<dbReference type="HOGENOM" id="CLU_055352_1_0_11"/>
<dbReference type="OrthoDB" id="9772545at2"/>
<dbReference type="UniPathway" id="UPA00245"/>
<dbReference type="Proteomes" id="UP000006820">
    <property type="component" value="Chromosome"/>
</dbReference>
<dbReference type="GO" id="GO:0036381">
    <property type="term" value="F:pyridoxal 5'-phosphate synthase (glutamine hydrolysing) activity"/>
    <property type="evidence" value="ECO:0007669"/>
    <property type="project" value="UniProtKB-UniRule"/>
</dbReference>
<dbReference type="GO" id="GO:0006520">
    <property type="term" value="P:amino acid metabolic process"/>
    <property type="evidence" value="ECO:0007669"/>
    <property type="project" value="TreeGrafter"/>
</dbReference>
<dbReference type="GO" id="GO:0042823">
    <property type="term" value="P:pyridoxal phosphate biosynthetic process"/>
    <property type="evidence" value="ECO:0007669"/>
    <property type="project" value="UniProtKB-UniRule"/>
</dbReference>
<dbReference type="GO" id="GO:0008615">
    <property type="term" value="P:pyridoxine biosynthetic process"/>
    <property type="evidence" value="ECO:0007669"/>
    <property type="project" value="TreeGrafter"/>
</dbReference>
<dbReference type="CDD" id="cd04727">
    <property type="entry name" value="pdxS"/>
    <property type="match status" value="1"/>
</dbReference>
<dbReference type="FunFam" id="3.20.20.70:FF:000001">
    <property type="entry name" value="Pyridoxine biosynthesis protein PDX1"/>
    <property type="match status" value="1"/>
</dbReference>
<dbReference type="Gene3D" id="3.20.20.70">
    <property type="entry name" value="Aldolase class I"/>
    <property type="match status" value="1"/>
</dbReference>
<dbReference type="HAMAP" id="MF_01824">
    <property type="entry name" value="PdxS"/>
    <property type="match status" value="1"/>
</dbReference>
<dbReference type="InterPro" id="IPR013785">
    <property type="entry name" value="Aldolase_TIM"/>
</dbReference>
<dbReference type="InterPro" id="IPR001852">
    <property type="entry name" value="PdxS/SNZ"/>
</dbReference>
<dbReference type="InterPro" id="IPR033755">
    <property type="entry name" value="PdxS/SNZ_N"/>
</dbReference>
<dbReference type="InterPro" id="IPR011060">
    <property type="entry name" value="RibuloseP-bd_barrel"/>
</dbReference>
<dbReference type="NCBIfam" id="NF003215">
    <property type="entry name" value="PRK04180.1"/>
    <property type="match status" value="1"/>
</dbReference>
<dbReference type="NCBIfam" id="TIGR00343">
    <property type="entry name" value="pyridoxal 5'-phosphate synthase lyase subunit PdxS"/>
    <property type="match status" value="1"/>
</dbReference>
<dbReference type="PANTHER" id="PTHR31829">
    <property type="entry name" value="PYRIDOXAL 5'-PHOSPHATE SYNTHASE SUBUNIT SNZ1-RELATED"/>
    <property type="match status" value="1"/>
</dbReference>
<dbReference type="PANTHER" id="PTHR31829:SF0">
    <property type="entry name" value="PYRIDOXAL 5'-PHOSPHATE SYNTHASE SUBUNIT SNZ1-RELATED"/>
    <property type="match status" value="1"/>
</dbReference>
<dbReference type="Pfam" id="PF01680">
    <property type="entry name" value="SOR_SNZ"/>
    <property type="match status" value="1"/>
</dbReference>
<dbReference type="PIRSF" id="PIRSF029271">
    <property type="entry name" value="Pdx1"/>
    <property type="match status" value="1"/>
</dbReference>
<dbReference type="SUPFAM" id="SSF51366">
    <property type="entry name" value="Ribulose-phoshate binding barrel"/>
    <property type="match status" value="1"/>
</dbReference>
<dbReference type="PROSITE" id="PS01235">
    <property type="entry name" value="PDXS_SNZ_1"/>
    <property type="match status" value="1"/>
</dbReference>
<dbReference type="PROSITE" id="PS51129">
    <property type="entry name" value="PDXS_SNZ_2"/>
    <property type="match status" value="1"/>
</dbReference>
<proteinExistence type="inferred from homology"/>
<evidence type="ECO:0000255" key="1">
    <source>
        <dbReference type="HAMAP-Rule" id="MF_01824"/>
    </source>
</evidence>
<name>PDXS_NOCFA</name>
<protein>
    <recommendedName>
        <fullName evidence="1">Pyridoxal 5'-phosphate synthase subunit PdxS</fullName>
        <shortName evidence="1">PLP synthase subunit PdxS</shortName>
        <ecNumber evidence="1">4.3.3.6</ecNumber>
    </recommendedName>
    <alternativeName>
        <fullName evidence="1">Pdx1</fullName>
    </alternativeName>
</protein>
<gene>
    <name evidence="1" type="primary">pdxS</name>
    <name type="ordered locus">NFA_37050</name>
</gene>
<organism>
    <name type="scientific">Nocardia farcinica (strain IFM 10152)</name>
    <dbReference type="NCBI Taxonomy" id="247156"/>
    <lineage>
        <taxon>Bacteria</taxon>
        <taxon>Bacillati</taxon>
        <taxon>Actinomycetota</taxon>
        <taxon>Actinomycetes</taxon>
        <taxon>Mycobacteriales</taxon>
        <taxon>Nocardiaceae</taxon>
        <taxon>Nocardia</taxon>
    </lineage>
</organism>
<keyword id="KW-0456">Lyase</keyword>
<keyword id="KW-0663">Pyridoxal phosphate</keyword>
<keyword id="KW-1185">Reference proteome</keyword>
<keyword id="KW-0704">Schiff base</keyword>
<reference key="1">
    <citation type="journal article" date="2004" name="Proc. Natl. Acad. Sci. U.S.A.">
        <title>The complete genomic sequence of Nocardia farcinica IFM 10152.</title>
        <authorList>
            <person name="Ishikawa J."/>
            <person name="Yamashita A."/>
            <person name="Mikami Y."/>
            <person name="Hoshino Y."/>
            <person name="Kurita H."/>
            <person name="Hotta K."/>
            <person name="Shiba T."/>
            <person name="Hattori M."/>
        </authorList>
    </citation>
    <scope>NUCLEOTIDE SEQUENCE [LARGE SCALE GENOMIC DNA]</scope>
    <source>
        <strain>IFM 10152</strain>
    </source>
</reference>